<protein>
    <recommendedName>
        <fullName>Nucleoprotein</fullName>
    </recommendedName>
    <alternativeName>
        <fullName>Nucleocapsid protein</fullName>
        <shortName>NP</shortName>
        <shortName>Protein N</shortName>
    </alternativeName>
</protein>
<organism>
    <name type="scientific">Rinderpest virus (strain Kuwait 82/1)</name>
    <name type="common">RDV</name>
    <dbReference type="NCBI Taxonomy" id="39006"/>
    <lineage>
        <taxon>Viruses</taxon>
        <taxon>Riboviria</taxon>
        <taxon>Orthornavirae</taxon>
        <taxon>Negarnaviricota</taxon>
        <taxon>Haploviricotina</taxon>
        <taxon>Monjiviricetes</taxon>
        <taxon>Mononegavirales</taxon>
        <taxon>Paramyxoviridae</taxon>
        <taxon>Orthoparamyxovirinae</taxon>
        <taxon>Morbillivirus</taxon>
        <taxon>Morbillivirus pecoris</taxon>
        <taxon>Rinderpest morbillivirus</taxon>
    </lineage>
</organism>
<proteinExistence type="inferred from homology"/>
<dbReference type="EMBL" id="Z34262">
    <property type="protein sequence ID" value="CAA84017.1"/>
    <property type="molecule type" value="Genomic_RNA"/>
</dbReference>
<dbReference type="PIR" id="S47308">
    <property type="entry name" value="S47308"/>
</dbReference>
<dbReference type="SMR" id="P41359"/>
<dbReference type="GO" id="GO:0019029">
    <property type="term" value="C:helical viral capsid"/>
    <property type="evidence" value="ECO:0007669"/>
    <property type="project" value="UniProtKB-KW"/>
</dbReference>
<dbReference type="GO" id="GO:0030430">
    <property type="term" value="C:host cell cytoplasm"/>
    <property type="evidence" value="ECO:0007669"/>
    <property type="project" value="UniProtKB-SubCell"/>
</dbReference>
<dbReference type="GO" id="GO:1990904">
    <property type="term" value="C:ribonucleoprotein complex"/>
    <property type="evidence" value="ECO:0007669"/>
    <property type="project" value="UniProtKB-KW"/>
</dbReference>
<dbReference type="GO" id="GO:0019013">
    <property type="term" value="C:viral nucleocapsid"/>
    <property type="evidence" value="ECO:0007669"/>
    <property type="project" value="UniProtKB-KW"/>
</dbReference>
<dbReference type="GO" id="GO:0003723">
    <property type="term" value="F:RNA binding"/>
    <property type="evidence" value="ECO:0007669"/>
    <property type="project" value="UniProtKB-KW"/>
</dbReference>
<dbReference type="GO" id="GO:0005198">
    <property type="term" value="F:structural molecule activity"/>
    <property type="evidence" value="ECO:0007669"/>
    <property type="project" value="InterPro"/>
</dbReference>
<dbReference type="InterPro" id="IPR002021">
    <property type="entry name" value="Paramyx_ncap"/>
</dbReference>
<dbReference type="Pfam" id="PF00973">
    <property type="entry name" value="Paramyxo_ncap"/>
    <property type="match status" value="1"/>
</dbReference>
<keyword id="KW-0167">Capsid protein</keyword>
<keyword id="KW-1139">Helical capsid protein</keyword>
<keyword id="KW-1035">Host cytoplasm</keyword>
<keyword id="KW-0687">Ribonucleoprotein</keyword>
<keyword id="KW-0694">RNA-binding</keyword>
<keyword id="KW-0543">Viral nucleoprotein</keyword>
<keyword id="KW-0946">Virion</keyword>
<feature type="chain" id="PRO_0000142678" description="Nucleoprotein">
    <location>
        <begin position="1"/>
        <end position="525"/>
    </location>
</feature>
<feature type="region of interest" description="Ncore" evidence="2">
    <location>
        <begin position="1"/>
        <end position="403"/>
    </location>
</feature>
<feature type="region of interest" description="RNA packaging and organization of the helical nucleocapsid" evidence="6">
    <location>
        <begin position="1"/>
        <end position="375"/>
    </location>
</feature>
<feature type="region of interest" description="Homomultimerization" evidence="3">
    <location>
        <begin position="1"/>
        <end position="36"/>
    </location>
</feature>
<feature type="region of interest" description="Homomultimerization" evidence="3">
    <location>
        <begin position="373"/>
        <end position="391"/>
    </location>
</feature>
<feature type="region of interest" description="Disordered" evidence="8">
    <location>
        <begin position="402"/>
        <end position="490"/>
    </location>
</feature>
<feature type="region of interest" description="Ntail" evidence="2">
    <location>
        <begin position="404"/>
        <end position="525"/>
    </location>
</feature>
<feature type="region of interest" description="Interaction with the phosphoprotein" evidence="5">
    <location>
        <begin position="477"/>
        <end position="505"/>
    </location>
</feature>
<feature type="region of interest" description="Disordered" evidence="8">
    <location>
        <begin position="506"/>
        <end position="525"/>
    </location>
</feature>
<feature type="compositionally biased region" description="Polar residues" evidence="8">
    <location>
        <begin position="408"/>
        <end position="432"/>
    </location>
</feature>
<feature type="compositionally biased region" description="Basic and acidic residues" evidence="8">
    <location>
        <begin position="433"/>
        <end position="464"/>
    </location>
</feature>
<feature type="binding site" evidence="5">
    <location>
        <position position="180"/>
    </location>
    <ligand>
        <name>RNA</name>
        <dbReference type="ChEBI" id="CHEBI:33697"/>
    </ligand>
</feature>
<feature type="binding site" evidence="5">
    <location>
        <position position="195"/>
    </location>
    <ligand>
        <name>RNA</name>
        <dbReference type="ChEBI" id="CHEBI:33697"/>
    </ligand>
</feature>
<feature type="binding site" evidence="5">
    <location>
        <position position="202"/>
    </location>
    <ligand>
        <name>RNA</name>
        <dbReference type="ChEBI" id="CHEBI:33697"/>
    </ligand>
</feature>
<feature type="binding site" evidence="5">
    <location>
        <position position="260"/>
    </location>
    <ligand>
        <name>RNA</name>
        <dbReference type="ChEBI" id="CHEBI:33697"/>
    </ligand>
</feature>
<feature type="binding site" evidence="5">
    <location>
        <position position="351"/>
    </location>
    <ligand>
        <name>RNA</name>
        <dbReference type="ChEBI" id="CHEBI:33697"/>
    </ligand>
</feature>
<reference key="1">
    <citation type="journal article" date="1995" name="J. Gen. Virol.">
        <title>Sequencing and analysis of the nucleocapsid (N) and polymerase (L) genes and the terminal extragenic domains of the vaccine strain of rinderpest virus.</title>
        <authorList>
            <person name="Baron M.D."/>
            <person name="Barrett T."/>
        </authorList>
    </citation>
    <scope>NUCLEOTIDE SEQUENCE [GENOMIC RNA]</scope>
</reference>
<evidence type="ECO:0000250" key="1">
    <source>
        <dbReference type="UniProtKB" id="O57286"/>
    </source>
</evidence>
<evidence type="ECO:0000250" key="2">
    <source>
        <dbReference type="UniProtKB" id="P06159"/>
    </source>
</evidence>
<evidence type="ECO:0000250" key="3">
    <source>
        <dbReference type="UniProtKB" id="P10050"/>
    </source>
</evidence>
<evidence type="ECO:0000250" key="4">
    <source>
        <dbReference type="UniProtKB" id="Q07097"/>
    </source>
</evidence>
<evidence type="ECO:0000250" key="5">
    <source>
        <dbReference type="UniProtKB" id="Q77M43"/>
    </source>
</evidence>
<evidence type="ECO:0000250" key="6">
    <source>
        <dbReference type="UniProtKB" id="Q89933"/>
    </source>
</evidence>
<evidence type="ECO:0000250" key="7">
    <source>
        <dbReference type="UniProtKB" id="Q9WMB5"/>
    </source>
</evidence>
<evidence type="ECO:0000256" key="8">
    <source>
        <dbReference type="SAM" id="MobiDB-lite"/>
    </source>
</evidence>
<evidence type="ECO:0000305" key="9"/>
<gene>
    <name type="primary">N</name>
    <name type="synonym">NP</name>
</gene>
<accession>P41359</accession>
<comment type="function">
    <text evidence="2 5">Forms the helical nucleocapsid (NC) in a ratio of 1 N per 6 ribonucleotides, protecting the genome from nucleases. The nucleocapsid (NC) has a helical structure with either 12.35 or 11.64 N per turn, approximately 20 nm in diameter, with a hollow central cavity approximately 5 nm in diameter (By similarity). The encapsidated genomic RNA serves as template for transcription and replication; encapsidation by N is coupled to RNA synthesis. Forms the encapsidation complex with the phosphoprotein protein P. Before encapsidation, the newly synthesized free N protein, so-called N0, is chaperoned by P (By similarity). Participates, together with P, in the formation of viral factories (viroplasms), which are large inclusions in the host cytoplasm where replication takes place (By similarity).</text>
</comment>
<comment type="subunit">
    <text evidence="1 2 4 5">Homomultimer; forms the nucleocapsid (By similarity). Binds to viral genomic RNA (By similarity). N0 interacts (via Ncore) with the phosphoprotein (via N-terminus); this interaction allows P to chaperon N0 to avoid N polymerization before encapsidation (By similarity). Interacts as N-RNA template with the phosphoprotein (via C-terminus); this interaction positions the polymerase on the template (By similarity). Interacts with the phosphoprotein; this interaction leads to the formation of membraneless organelles that function as viral replication factories (By similarity).</text>
</comment>
<comment type="subcellular location">
    <subcellularLocation>
        <location evidence="7">Virion</location>
    </subcellularLocation>
    <subcellularLocation>
        <location evidence="7">Host cytoplasm</location>
    </subcellularLocation>
</comment>
<comment type="domain">
    <text evidence="5">Ncore is globular and carries regions required for N self-assembly and RNA-binding. Ntail is an intrinsically disordered monomeric domain in the C-terminus.</text>
</comment>
<comment type="similarity">
    <text evidence="9">Belongs to the paramyxoviruses nucleocapsid family.</text>
</comment>
<name>NCAP_RINDU</name>
<sequence length="525" mass="58253">MASLLKSLALFKKNKDKPPLAAGSGGAIRGIKHVIIVPIPGDSSITTRSRLLDRLVKMVGDPDISGPKLTGALISILSLFVESPGQLIQRITDDPDISIKLVEVVQSDKTQSGLTFASRGTSMDDEADRYFTYDEPNDGEERQSYWFENREIQDIEVQDPEGFNMILATILAQIWILLAKAVTAPDTAADSELRRWVKYTQQRRVIGEFKLDKGWLDTVRNRIAEDLSLRRFMVALILDIKRTPGNKPRIAEMICDIDTYIVEAGLASFILTIKFGIETMYPALGLHEFAGELSTIESLMNLYQQMGELAPYMVILENSIQNKFSAGAYPLLWSYAMGVGVELENSMGGLNFGRSYFDPAYFRLGQEMVRRSAGKVSSNLASELGITEEEARLVSEIAAYTGDDRNNRTSGPKQAQVSFLRTDQGGETQNNASKRDEARAPQIRKEARTSSKSDKYKEDTDKEPMSPSVKTLIDVDTTPEVDTDPLGSKKSAEALIRLQAMASILEDSTFGNDSPRAYNDRDLLS</sequence>
<organismHost>
    <name type="scientific">Bos indicus</name>
    <name type="common">Zebu</name>
    <dbReference type="NCBI Taxonomy" id="9915"/>
</organismHost>
<organismHost>
    <name type="scientific">Bos taurus</name>
    <name type="common">Bovine</name>
    <dbReference type="NCBI Taxonomy" id="9913"/>
</organismHost>
<organismHost>
    <name type="scientific">Bubalus bubalis</name>
    <name type="common">Domestic water buffalo</name>
    <dbReference type="NCBI Taxonomy" id="89462"/>
</organismHost>
<organismHost>
    <name type="scientific">Capra hircus</name>
    <name type="common">Goat</name>
    <dbReference type="NCBI Taxonomy" id="9925"/>
</organismHost>
<organismHost>
    <name type="scientific">Gazella</name>
    <name type="common">gazelles</name>
    <dbReference type="NCBI Taxonomy" id="9933"/>
</organismHost>
<organismHost>
    <name type="scientific">Giraffa camelopardalis</name>
    <name type="common">Giraffe</name>
    <dbReference type="NCBI Taxonomy" id="9894"/>
</organismHost>
<organismHost>
    <name type="scientific">Hippopotamus</name>
    <dbReference type="NCBI Taxonomy" id="9832"/>
</organismHost>
<organismHost>
    <name type="scientific">Ovis aries</name>
    <name type="common">Sheep</name>
    <dbReference type="NCBI Taxonomy" id="9940"/>
</organismHost>
<organismHost>
    <name type="scientific">Suidae</name>
    <name type="common">pigs</name>
    <dbReference type="NCBI Taxonomy" id="9821"/>
</organismHost>